<accession>Q7WBF2</accession>
<dbReference type="EMBL" id="BX640426">
    <property type="protein sequence ID" value="CAE36352.1"/>
    <property type="molecule type" value="Genomic_DNA"/>
</dbReference>
<dbReference type="RefSeq" id="WP_010927831.1">
    <property type="nucleotide sequence ID" value="NC_002928.3"/>
</dbReference>
<dbReference type="KEGG" id="bpa:BPP1051"/>
<dbReference type="HOGENOM" id="CLU_106619_2_1_4"/>
<dbReference type="Proteomes" id="UP000001421">
    <property type="component" value="Chromosome"/>
</dbReference>
<dbReference type="CDD" id="cd18720">
    <property type="entry name" value="PIN_YqxD-like"/>
    <property type="match status" value="1"/>
</dbReference>
<dbReference type="HAMAP" id="MF_00489">
    <property type="entry name" value="UPF0178"/>
    <property type="match status" value="1"/>
</dbReference>
<dbReference type="InterPro" id="IPR003791">
    <property type="entry name" value="UPF0178"/>
</dbReference>
<dbReference type="NCBIfam" id="NF001095">
    <property type="entry name" value="PRK00124.1"/>
    <property type="match status" value="1"/>
</dbReference>
<dbReference type="PANTHER" id="PTHR35146">
    <property type="entry name" value="UPF0178 PROTEIN YAII"/>
    <property type="match status" value="1"/>
</dbReference>
<dbReference type="PANTHER" id="PTHR35146:SF1">
    <property type="entry name" value="UPF0178 PROTEIN YAII"/>
    <property type="match status" value="1"/>
</dbReference>
<dbReference type="Pfam" id="PF02639">
    <property type="entry name" value="DUF188"/>
    <property type="match status" value="1"/>
</dbReference>
<sequence length="160" mass="16988">MNIWVDADACPAEVKDILWRAAQRWQVPVTLVANQLLRVPASPWMRAVQVPRGFDVADAHIVASAVPGDLVITADIPLAAEVVGKGVAAMSWRGEVFDAGSIGERLTMRDMMEELRAGGVDIGGPAAFGQADRRAFANALDAAMQRWARTRGAGGKPGAV</sequence>
<reference key="1">
    <citation type="journal article" date="2003" name="Nat. Genet.">
        <title>Comparative analysis of the genome sequences of Bordetella pertussis, Bordetella parapertussis and Bordetella bronchiseptica.</title>
        <authorList>
            <person name="Parkhill J."/>
            <person name="Sebaihia M."/>
            <person name="Preston A."/>
            <person name="Murphy L.D."/>
            <person name="Thomson N.R."/>
            <person name="Harris D.E."/>
            <person name="Holden M.T.G."/>
            <person name="Churcher C.M."/>
            <person name="Bentley S.D."/>
            <person name="Mungall K.L."/>
            <person name="Cerdeno-Tarraga A.-M."/>
            <person name="Temple L."/>
            <person name="James K.D."/>
            <person name="Harris B."/>
            <person name="Quail M.A."/>
            <person name="Achtman M."/>
            <person name="Atkin R."/>
            <person name="Baker S."/>
            <person name="Basham D."/>
            <person name="Bason N."/>
            <person name="Cherevach I."/>
            <person name="Chillingworth T."/>
            <person name="Collins M."/>
            <person name="Cronin A."/>
            <person name="Davis P."/>
            <person name="Doggett J."/>
            <person name="Feltwell T."/>
            <person name="Goble A."/>
            <person name="Hamlin N."/>
            <person name="Hauser H."/>
            <person name="Holroyd S."/>
            <person name="Jagels K."/>
            <person name="Leather S."/>
            <person name="Moule S."/>
            <person name="Norberczak H."/>
            <person name="O'Neil S."/>
            <person name="Ormond D."/>
            <person name="Price C."/>
            <person name="Rabbinowitsch E."/>
            <person name="Rutter S."/>
            <person name="Sanders M."/>
            <person name="Saunders D."/>
            <person name="Seeger K."/>
            <person name="Sharp S."/>
            <person name="Simmonds M."/>
            <person name="Skelton J."/>
            <person name="Squares R."/>
            <person name="Squares S."/>
            <person name="Stevens K."/>
            <person name="Unwin L."/>
            <person name="Whitehead S."/>
            <person name="Barrell B.G."/>
            <person name="Maskell D.J."/>
        </authorList>
    </citation>
    <scope>NUCLEOTIDE SEQUENCE [LARGE SCALE GENOMIC DNA]</scope>
    <source>
        <strain>12822 / ATCC BAA-587 / NCTC 13253</strain>
    </source>
</reference>
<gene>
    <name type="ordered locus">BPP1051</name>
</gene>
<protein>
    <recommendedName>
        <fullName evidence="1">UPF0178 protein BPP1051</fullName>
    </recommendedName>
</protein>
<evidence type="ECO:0000255" key="1">
    <source>
        <dbReference type="HAMAP-Rule" id="MF_00489"/>
    </source>
</evidence>
<comment type="similarity">
    <text evidence="1">Belongs to the UPF0178 family.</text>
</comment>
<feature type="chain" id="PRO_0000175965" description="UPF0178 protein BPP1051">
    <location>
        <begin position="1"/>
        <end position="160"/>
    </location>
</feature>
<organism>
    <name type="scientific">Bordetella parapertussis (strain 12822 / ATCC BAA-587 / NCTC 13253)</name>
    <dbReference type="NCBI Taxonomy" id="257311"/>
    <lineage>
        <taxon>Bacteria</taxon>
        <taxon>Pseudomonadati</taxon>
        <taxon>Pseudomonadota</taxon>
        <taxon>Betaproteobacteria</taxon>
        <taxon>Burkholderiales</taxon>
        <taxon>Alcaligenaceae</taxon>
        <taxon>Bordetella</taxon>
    </lineage>
</organism>
<proteinExistence type="inferred from homology"/>
<name>Y1051_BORPA</name>